<comment type="subcellular location">
    <subcellularLocation>
        <location evidence="1">Host cytoplasm</location>
    </subcellularLocation>
    <subcellularLocation>
        <location evidence="1">Virion</location>
    </subcellularLocation>
</comment>
<comment type="similarity">
    <text evidence="2">Belongs to the ovine/caprine lentivirus group Vif protein family.</text>
</comment>
<sequence length="230" mass="28139">MLSSYRHQKKYKKNKAREIGPQLPLWAWKETAFSINQEPYWYSTIRLQGLMWNKRGHKLMFVKENQGYEYWETSGKQWKMEIRRDLDLIAQINFRNAWQYKSQGEWKTIGVWYESPGDYKGKENQFWFHWRIALCSCNKTRWDIREFMIGKHRWDLCKSCIQGEIVKNTNPRSLQRLALLHLAKDHVFQVMPLWRARRVTVQKFPWCRSPMGYTIPWSLQECWEMESIFE</sequence>
<keyword id="KW-0002">3D-structure</keyword>
<keyword id="KW-1035">Host cytoplasm</keyword>
<keyword id="KW-0946">Virion</keyword>
<dbReference type="EMBL" id="S55323">
    <property type="protein sequence ID" value="AAB25461.1"/>
    <property type="molecule type" value="Genomic_DNA"/>
</dbReference>
<dbReference type="EMBL" id="L06906">
    <property type="protein sequence ID" value="AAA48360.1"/>
    <property type="molecule type" value="Genomic_RNA"/>
</dbReference>
<dbReference type="PDB" id="7UPN">
    <property type="method" value="EM"/>
    <property type="resolution" value="3.50 A"/>
    <property type="chains" value="C/F=1-230"/>
</dbReference>
<dbReference type="PDBsum" id="7UPN"/>
<dbReference type="EMDB" id="EMD-26673"/>
<dbReference type="SMR" id="P69717"/>
<dbReference type="KEGG" id="vg:1490014"/>
<dbReference type="Proteomes" id="UP000202605">
    <property type="component" value="Segment"/>
</dbReference>
<dbReference type="GO" id="GO:0030430">
    <property type="term" value="C:host cell cytoplasm"/>
    <property type="evidence" value="ECO:0007669"/>
    <property type="project" value="UniProtKB-SubCell"/>
</dbReference>
<dbReference type="GO" id="GO:0044423">
    <property type="term" value="C:virion component"/>
    <property type="evidence" value="ECO:0007669"/>
    <property type="project" value="UniProtKB-KW"/>
</dbReference>
<dbReference type="InterPro" id="IPR009979">
    <property type="entry name" value="Lenti_VIF_2"/>
</dbReference>
<dbReference type="Pfam" id="PF07401">
    <property type="entry name" value="Lenti_VIF_2"/>
    <property type="match status" value="1"/>
</dbReference>
<organismHost>
    <name type="scientific">Ovis aries</name>
    <name type="common">Sheep</name>
    <dbReference type="NCBI Taxonomy" id="9940"/>
</organismHost>
<evidence type="ECO:0000250" key="1"/>
<evidence type="ECO:0000305" key="2"/>
<evidence type="ECO:0007829" key="3">
    <source>
        <dbReference type="PDB" id="7UPN"/>
    </source>
</evidence>
<reference key="1">
    <citation type="journal article" date="1993" name="Virology">
        <title>Nucleotide sequence and biological properties of a pathogenic proviral molecular clone of neurovirulent visna virus.</title>
        <authorList>
            <person name="Andresson O.S."/>
            <person name="Elser J.E."/>
            <person name="Tobin G.J."/>
            <person name="Greenwood J.D."/>
            <person name="Gonda M.A."/>
            <person name="Georgsson G."/>
            <person name="Andresdottir V."/>
            <person name="Benediktsdottir E."/>
            <person name="Carlsdottir H.M."/>
            <person name="Maentylae E.O."/>
            <person name="Rafnar B."/>
            <person name="Palsson P.A."/>
            <person name="Casey J.W."/>
            <person name="Petursson G."/>
        </authorList>
    </citation>
    <scope>NUCLEOTIDE SEQUENCE [GENOMIC DNA]</scope>
</reference>
<protein>
    <recommendedName>
        <fullName>Virion infectivity factor</fullName>
    </recommendedName>
    <alternativeName>
        <fullName>Q protein</fullName>
    </alternativeName>
</protein>
<accession>P69717</accession>
<accession>P03403</accession>
<feature type="chain" id="PRO_0000085507" description="Virion infectivity factor">
    <location>
        <begin position="1"/>
        <end position="230"/>
    </location>
</feature>
<feature type="turn" evidence="3">
    <location>
        <begin position="24"/>
        <end position="28"/>
    </location>
</feature>
<feature type="turn" evidence="3">
    <location>
        <begin position="39"/>
        <end position="41"/>
    </location>
</feature>
<feature type="helix" evidence="3">
    <location>
        <begin position="42"/>
        <end position="51"/>
    </location>
</feature>
<feature type="strand" evidence="3">
    <location>
        <begin position="52"/>
        <end position="54"/>
    </location>
</feature>
<feature type="strand" evidence="3">
    <location>
        <begin position="61"/>
        <end position="70"/>
    </location>
</feature>
<feature type="strand" evidence="3">
    <location>
        <begin position="75"/>
        <end position="77"/>
    </location>
</feature>
<feature type="strand" evidence="3">
    <location>
        <begin position="81"/>
        <end position="83"/>
    </location>
</feature>
<feature type="strand" evidence="3">
    <location>
        <begin position="99"/>
        <end position="102"/>
    </location>
</feature>
<feature type="strand" evidence="3">
    <location>
        <begin position="105"/>
        <end position="108"/>
    </location>
</feature>
<feature type="helix" evidence="3">
    <location>
        <begin position="116"/>
        <end position="119"/>
    </location>
</feature>
<feature type="helix" evidence="3">
    <location>
        <begin position="124"/>
        <end position="134"/>
    </location>
</feature>
<feature type="turn" evidence="3">
    <location>
        <begin position="144"/>
        <end position="147"/>
    </location>
</feature>
<feature type="strand" evidence="3">
    <location>
        <begin position="148"/>
        <end position="150"/>
    </location>
</feature>
<feature type="helix" evidence="3">
    <location>
        <begin position="158"/>
        <end position="168"/>
    </location>
</feature>
<feature type="strand" evidence="3">
    <location>
        <begin position="171"/>
        <end position="173"/>
    </location>
</feature>
<feature type="turn" evidence="3">
    <location>
        <begin position="174"/>
        <end position="177"/>
    </location>
</feature>
<feature type="helix" evidence="3">
    <location>
        <begin position="178"/>
        <end position="182"/>
    </location>
</feature>
<feature type="turn" evidence="3">
    <location>
        <begin position="211"/>
        <end position="213"/>
    </location>
</feature>
<feature type="helix" evidence="3">
    <location>
        <begin position="219"/>
        <end position="222"/>
    </location>
</feature>
<organism>
    <name type="scientific">Maedi visna virus (strain KV1772)</name>
    <name type="common">MVV</name>
    <name type="synonym">Visna lentivirus</name>
    <dbReference type="NCBI Taxonomy" id="36374"/>
    <lineage>
        <taxon>Viruses</taxon>
        <taxon>Riboviria</taxon>
        <taxon>Pararnavirae</taxon>
        <taxon>Artverviricota</taxon>
        <taxon>Revtraviricetes</taxon>
        <taxon>Ortervirales</taxon>
        <taxon>Retroviridae</taxon>
        <taxon>Orthoretrovirinae</taxon>
        <taxon>Lentivirus</taxon>
        <taxon>Visna-maedi virus</taxon>
    </lineage>
</organism>
<gene>
    <name type="primary">vif</name>
</gene>
<name>VIF_VILVK</name>
<proteinExistence type="evidence at protein level"/>